<keyword id="KW-0030">Aminoacyl-tRNA synthetase</keyword>
<keyword id="KW-0067">ATP-binding</keyword>
<keyword id="KW-0963">Cytoplasm</keyword>
<keyword id="KW-0436">Ligase</keyword>
<keyword id="KW-0479">Metal-binding</keyword>
<keyword id="KW-0547">Nucleotide-binding</keyword>
<keyword id="KW-0648">Protein biosynthesis</keyword>
<keyword id="KW-1185">Reference proteome</keyword>
<keyword id="KW-0862">Zinc</keyword>
<comment type="function">
    <text evidence="1">Is required not only for elongation of protein synthesis but also for the initiation of all mRNA translation through initiator tRNA(fMet) aminoacylation.</text>
</comment>
<comment type="catalytic activity">
    <reaction>
        <text>tRNA(Met) + L-methionine + ATP = L-methionyl-tRNA(Met) + AMP + diphosphate</text>
        <dbReference type="Rhea" id="RHEA:13481"/>
        <dbReference type="Rhea" id="RHEA-COMP:9667"/>
        <dbReference type="Rhea" id="RHEA-COMP:9698"/>
        <dbReference type="ChEBI" id="CHEBI:30616"/>
        <dbReference type="ChEBI" id="CHEBI:33019"/>
        <dbReference type="ChEBI" id="CHEBI:57844"/>
        <dbReference type="ChEBI" id="CHEBI:78442"/>
        <dbReference type="ChEBI" id="CHEBI:78530"/>
        <dbReference type="ChEBI" id="CHEBI:456215"/>
        <dbReference type="EC" id="6.1.1.10"/>
    </reaction>
</comment>
<comment type="cofactor">
    <cofactor evidence="1">
        <name>Zn(2+)</name>
        <dbReference type="ChEBI" id="CHEBI:29105"/>
    </cofactor>
    <text evidence="1">Binds 1 zinc ion per subunit.</text>
</comment>
<comment type="subunit">
    <text evidence="1">Monomer.</text>
</comment>
<comment type="subcellular location">
    <subcellularLocation>
        <location evidence="1">Cytoplasm</location>
    </subcellularLocation>
</comment>
<comment type="similarity">
    <text evidence="2">Belongs to the class-I aminoacyl-tRNA synthetase family. MetG type 1 subfamily.</text>
</comment>
<name>SYM_BUCAI</name>
<protein>
    <recommendedName>
        <fullName>Methionine--tRNA ligase</fullName>
        <ecNumber>6.1.1.10</ecNumber>
    </recommendedName>
    <alternativeName>
        <fullName>Methionyl-tRNA synthetase</fullName>
        <shortName>MetRS</shortName>
    </alternativeName>
</protein>
<reference key="1">
    <citation type="journal article" date="2000" name="Nature">
        <title>Genome sequence of the endocellular bacterial symbiont of aphids Buchnera sp. APS.</title>
        <authorList>
            <person name="Shigenobu S."/>
            <person name="Watanabe H."/>
            <person name="Hattori M."/>
            <person name="Sakaki Y."/>
            <person name="Ishikawa H."/>
        </authorList>
    </citation>
    <scope>NUCLEOTIDE SEQUENCE [LARGE SCALE GENOMIC DNA]</scope>
    <source>
        <strain>APS</strain>
    </source>
</reference>
<sequence>MSSVFRKILVTCALPYANGSIHIGHMLEHIQADIWVRYHRMRGHEVWFVSADDAHGTAIMLKAQDLEISPNKLIKNIRIEHQIDFSNFKISHDNYYSTHSLENLYLSRKIFTCLNEKGLIKEKKIFQLYDTVKKIFLPDRFIKGTCPICKSKNQYGDNCEICSATYEPTDLINPISVISGKKPILKNTKHLYFDLPSFTNMLKKWIHSGVLEESVIKKTEEWFKVGLKSWAISRDAPYFGFKIPNYPNKYFYVWLDAPIGYISAFKNLCFKSKKLNFNELWNQNSNYELYHFIGKDIIYFHTLFWPAILEAVSFRQPSGIFVHGHLTMNGLKLSKSRGALIKASDWIQYFDSDSLRYYYASKLSNKTHDIEINLEDFIQKINSDIVNKLVNLAARNASFINKYFNGYLSDKLSNIKLYKYFVNTSSSIEDFFENREFSFIVKESMRLLDVANQYINEKKPWKIKRTEENIRELQNICTMGINLFRIIMIFLKPIVPDLAIKTESFLISKLTWDGIKKPLLSHQINKFFPLYKRIDVEKMFEFMNICR</sequence>
<evidence type="ECO:0000250" key="1"/>
<evidence type="ECO:0000305" key="2"/>
<gene>
    <name type="primary">metG</name>
    <name type="ordered locus">BU109</name>
</gene>
<organism>
    <name type="scientific">Buchnera aphidicola subsp. Acyrthosiphon pisum (strain APS)</name>
    <name type="common">Acyrthosiphon pisum symbiotic bacterium</name>
    <dbReference type="NCBI Taxonomy" id="107806"/>
    <lineage>
        <taxon>Bacteria</taxon>
        <taxon>Pseudomonadati</taxon>
        <taxon>Pseudomonadota</taxon>
        <taxon>Gammaproteobacteria</taxon>
        <taxon>Enterobacterales</taxon>
        <taxon>Erwiniaceae</taxon>
        <taxon>Buchnera</taxon>
    </lineage>
</organism>
<dbReference type="EC" id="6.1.1.10"/>
<dbReference type="EMBL" id="BA000003">
    <property type="protein sequence ID" value="BAB12828.1"/>
    <property type="molecule type" value="Genomic_DNA"/>
</dbReference>
<dbReference type="RefSeq" id="NP_239942.1">
    <property type="nucleotide sequence ID" value="NC_002528.1"/>
</dbReference>
<dbReference type="RefSeq" id="WP_009874064.1">
    <property type="nucleotide sequence ID" value="NC_002528.1"/>
</dbReference>
<dbReference type="SMR" id="P57210"/>
<dbReference type="STRING" id="563178.BUAP5A_107"/>
<dbReference type="EnsemblBacteria" id="BAB12828">
    <property type="protein sequence ID" value="BAB12828"/>
    <property type="gene ID" value="BAB12828"/>
</dbReference>
<dbReference type="KEGG" id="buc:BU109"/>
<dbReference type="PATRIC" id="fig|107806.10.peg.117"/>
<dbReference type="eggNOG" id="COG0143">
    <property type="taxonomic scope" value="Bacteria"/>
</dbReference>
<dbReference type="HOGENOM" id="CLU_009710_7_0_6"/>
<dbReference type="Proteomes" id="UP000001806">
    <property type="component" value="Chromosome"/>
</dbReference>
<dbReference type="GO" id="GO:0005829">
    <property type="term" value="C:cytosol"/>
    <property type="evidence" value="ECO:0007669"/>
    <property type="project" value="TreeGrafter"/>
</dbReference>
<dbReference type="GO" id="GO:0005524">
    <property type="term" value="F:ATP binding"/>
    <property type="evidence" value="ECO:0007669"/>
    <property type="project" value="UniProtKB-UniRule"/>
</dbReference>
<dbReference type="GO" id="GO:0046872">
    <property type="term" value="F:metal ion binding"/>
    <property type="evidence" value="ECO:0007669"/>
    <property type="project" value="UniProtKB-KW"/>
</dbReference>
<dbReference type="GO" id="GO:0004825">
    <property type="term" value="F:methionine-tRNA ligase activity"/>
    <property type="evidence" value="ECO:0007669"/>
    <property type="project" value="UniProtKB-UniRule"/>
</dbReference>
<dbReference type="GO" id="GO:0006431">
    <property type="term" value="P:methionyl-tRNA aminoacylation"/>
    <property type="evidence" value="ECO:0007669"/>
    <property type="project" value="UniProtKB-UniRule"/>
</dbReference>
<dbReference type="CDD" id="cd07957">
    <property type="entry name" value="Anticodon_Ia_Met"/>
    <property type="match status" value="1"/>
</dbReference>
<dbReference type="FunFam" id="1.10.730.10:FF:000005">
    <property type="entry name" value="Methionine--tRNA ligase"/>
    <property type="match status" value="1"/>
</dbReference>
<dbReference type="FunFam" id="2.20.28.20:FF:000001">
    <property type="entry name" value="Methionine--tRNA ligase"/>
    <property type="match status" value="1"/>
</dbReference>
<dbReference type="Gene3D" id="3.40.50.620">
    <property type="entry name" value="HUPs"/>
    <property type="match status" value="1"/>
</dbReference>
<dbReference type="Gene3D" id="1.10.730.10">
    <property type="entry name" value="Isoleucyl-tRNA Synthetase, Domain 1"/>
    <property type="match status" value="1"/>
</dbReference>
<dbReference type="Gene3D" id="2.20.28.20">
    <property type="entry name" value="Methionyl-tRNA synthetase, Zn-domain"/>
    <property type="match status" value="1"/>
</dbReference>
<dbReference type="HAMAP" id="MF_00098">
    <property type="entry name" value="Met_tRNA_synth_type1"/>
    <property type="match status" value="1"/>
</dbReference>
<dbReference type="InterPro" id="IPR001412">
    <property type="entry name" value="aa-tRNA-synth_I_CS"/>
</dbReference>
<dbReference type="InterPro" id="IPR041872">
    <property type="entry name" value="Anticodon_Met"/>
</dbReference>
<dbReference type="InterPro" id="IPR023458">
    <property type="entry name" value="Met-tRNA_ligase_1"/>
</dbReference>
<dbReference type="InterPro" id="IPR014758">
    <property type="entry name" value="Met-tRNA_synth"/>
</dbReference>
<dbReference type="InterPro" id="IPR015413">
    <property type="entry name" value="Methionyl/Leucyl_tRNA_Synth"/>
</dbReference>
<dbReference type="InterPro" id="IPR033911">
    <property type="entry name" value="MetRS_core"/>
</dbReference>
<dbReference type="InterPro" id="IPR029038">
    <property type="entry name" value="MetRS_Zn"/>
</dbReference>
<dbReference type="InterPro" id="IPR014729">
    <property type="entry name" value="Rossmann-like_a/b/a_fold"/>
</dbReference>
<dbReference type="InterPro" id="IPR009080">
    <property type="entry name" value="tRNAsynth_Ia_anticodon-bd"/>
</dbReference>
<dbReference type="NCBIfam" id="TIGR00398">
    <property type="entry name" value="metG"/>
    <property type="match status" value="1"/>
</dbReference>
<dbReference type="NCBIfam" id="NF001100">
    <property type="entry name" value="PRK00133.1"/>
    <property type="match status" value="1"/>
</dbReference>
<dbReference type="PANTHER" id="PTHR45765">
    <property type="entry name" value="METHIONINE--TRNA LIGASE"/>
    <property type="match status" value="1"/>
</dbReference>
<dbReference type="PANTHER" id="PTHR45765:SF1">
    <property type="entry name" value="METHIONINE--TRNA LIGASE, CYTOPLASMIC"/>
    <property type="match status" value="1"/>
</dbReference>
<dbReference type="Pfam" id="PF09334">
    <property type="entry name" value="tRNA-synt_1g"/>
    <property type="match status" value="1"/>
</dbReference>
<dbReference type="PRINTS" id="PR01041">
    <property type="entry name" value="TRNASYNTHMET"/>
</dbReference>
<dbReference type="SUPFAM" id="SSF47323">
    <property type="entry name" value="Anticodon-binding domain of a subclass of class I aminoacyl-tRNA synthetases"/>
    <property type="match status" value="1"/>
</dbReference>
<dbReference type="SUPFAM" id="SSF57770">
    <property type="entry name" value="Methionyl-tRNA synthetase (MetRS), Zn-domain"/>
    <property type="match status" value="1"/>
</dbReference>
<dbReference type="SUPFAM" id="SSF52374">
    <property type="entry name" value="Nucleotidylyl transferase"/>
    <property type="match status" value="1"/>
</dbReference>
<dbReference type="PROSITE" id="PS00178">
    <property type="entry name" value="AA_TRNA_LIGASE_I"/>
    <property type="match status" value="1"/>
</dbReference>
<proteinExistence type="inferred from homology"/>
<accession>P57210</accession>
<feature type="chain" id="PRO_0000139111" description="Methionine--tRNA ligase">
    <location>
        <begin position="1"/>
        <end position="547"/>
    </location>
</feature>
<feature type="short sequence motif" description="'HIGH' region">
    <location>
        <begin position="15"/>
        <end position="25"/>
    </location>
</feature>
<feature type="short sequence motif" description="'KMSKS' region">
    <location>
        <begin position="332"/>
        <end position="336"/>
    </location>
</feature>
<feature type="binding site" evidence="1">
    <location>
        <position position="146"/>
    </location>
    <ligand>
        <name>Zn(2+)</name>
        <dbReference type="ChEBI" id="CHEBI:29105"/>
    </ligand>
</feature>
<feature type="binding site" evidence="1">
    <location>
        <position position="149"/>
    </location>
    <ligand>
        <name>Zn(2+)</name>
        <dbReference type="ChEBI" id="CHEBI:29105"/>
    </ligand>
</feature>
<feature type="binding site" evidence="1">
    <location>
        <position position="159"/>
    </location>
    <ligand>
        <name>Zn(2+)</name>
        <dbReference type="ChEBI" id="CHEBI:29105"/>
    </ligand>
</feature>
<feature type="binding site" evidence="1">
    <location>
        <position position="162"/>
    </location>
    <ligand>
        <name>Zn(2+)</name>
        <dbReference type="ChEBI" id="CHEBI:29105"/>
    </ligand>
</feature>
<feature type="binding site" evidence="1">
    <location>
        <position position="335"/>
    </location>
    <ligand>
        <name>ATP</name>
        <dbReference type="ChEBI" id="CHEBI:30616"/>
    </ligand>
</feature>